<organism>
    <name type="scientific">Mycobacterium ulcerans (strain Agy99)</name>
    <dbReference type="NCBI Taxonomy" id="362242"/>
    <lineage>
        <taxon>Bacteria</taxon>
        <taxon>Bacillati</taxon>
        <taxon>Actinomycetota</taxon>
        <taxon>Actinomycetes</taxon>
        <taxon>Mycobacteriales</taxon>
        <taxon>Mycobacteriaceae</taxon>
        <taxon>Mycobacterium</taxon>
        <taxon>Mycobacterium ulcerans group</taxon>
    </lineage>
</organism>
<keyword id="KW-0378">Hydrolase</keyword>
<keyword id="KW-0408">Iron</keyword>
<keyword id="KW-0479">Metal-binding</keyword>
<keyword id="KW-0648">Protein biosynthesis</keyword>
<evidence type="ECO:0000255" key="1">
    <source>
        <dbReference type="HAMAP-Rule" id="MF_00163"/>
    </source>
</evidence>
<feature type="chain" id="PRO_0000301064" description="Peptide deformylase">
    <location>
        <begin position="1"/>
        <end position="197"/>
    </location>
</feature>
<feature type="active site" evidence="1">
    <location>
        <position position="149"/>
    </location>
</feature>
<feature type="binding site" evidence="1">
    <location>
        <position position="106"/>
    </location>
    <ligand>
        <name>Fe cation</name>
        <dbReference type="ChEBI" id="CHEBI:24875"/>
    </ligand>
</feature>
<feature type="binding site" evidence="1">
    <location>
        <position position="148"/>
    </location>
    <ligand>
        <name>Fe cation</name>
        <dbReference type="ChEBI" id="CHEBI:24875"/>
    </ligand>
</feature>
<feature type="binding site" evidence="1">
    <location>
        <position position="152"/>
    </location>
    <ligand>
        <name>Fe cation</name>
        <dbReference type="ChEBI" id="CHEBI:24875"/>
    </ligand>
</feature>
<dbReference type="EC" id="3.5.1.88" evidence="1"/>
<dbReference type="EMBL" id="CP000325">
    <property type="protein sequence ID" value="ABL03921.1"/>
    <property type="molecule type" value="Genomic_DNA"/>
</dbReference>
<dbReference type="RefSeq" id="WP_011739542.1">
    <property type="nucleotide sequence ID" value="NC_008611.1"/>
</dbReference>
<dbReference type="SMR" id="A0PNK2"/>
<dbReference type="KEGG" id="mul:MUL_1376"/>
<dbReference type="eggNOG" id="COG0242">
    <property type="taxonomic scope" value="Bacteria"/>
</dbReference>
<dbReference type="HOGENOM" id="CLU_061901_1_2_11"/>
<dbReference type="Proteomes" id="UP000000765">
    <property type="component" value="Chromosome"/>
</dbReference>
<dbReference type="GO" id="GO:0046872">
    <property type="term" value="F:metal ion binding"/>
    <property type="evidence" value="ECO:0007669"/>
    <property type="project" value="UniProtKB-KW"/>
</dbReference>
<dbReference type="GO" id="GO:0042586">
    <property type="term" value="F:peptide deformylase activity"/>
    <property type="evidence" value="ECO:0007669"/>
    <property type="project" value="UniProtKB-UniRule"/>
</dbReference>
<dbReference type="GO" id="GO:0043686">
    <property type="term" value="P:co-translational protein modification"/>
    <property type="evidence" value="ECO:0007669"/>
    <property type="project" value="TreeGrafter"/>
</dbReference>
<dbReference type="GO" id="GO:0006412">
    <property type="term" value="P:translation"/>
    <property type="evidence" value="ECO:0007669"/>
    <property type="project" value="UniProtKB-UniRule"/>
</dbReference>
<dbReference type="CDD" id="cd00487">
    <property type="entry name" value="Pep_deformylase"/>
    <property type="match status" value="1"/>
</dbReference>
<dbReference type="Gene3D" id="3.90.45.10">
    <property type="entry name" value="Peptide deformylase"/>
    <property type="match status" value="1"/>
</dbReference>
<dbReference type="HAMAP" id="MF_00163">
    <property type="entry name" value="Pep_deformylase"/>
    <property type="match status" value="1"/>
</dbReference>
<dbReference type="InterPro" id="IPR023635">
    <property type="entry name" value="Peptide_deformylase"/>
</dbReference>
<dbReference type="InterPro" id="IPR036821">
    <property type="entry name" value="Peptide_deformylase_sf"/>
</dbReference>
<dbReference type="NCBIfam" id="NF001159">
    <property type="entry name" value="PRK00150.1-3"/>
    <property type="match status" value="1"/>
</dbReference>
<dbReference type="NCBIfam" id="NF009483">
    <property type="entry name" value="PRK12846.1-4"/>
    <property type="match status" value="1"/>
</dbReference>
<dbReference type="PANTHER" id="PTHR10458">
    <property type="entry name" value="PEPTIDE DEFORMYLASE"/>
    <property type="match status" value="1"/>
</dbReference>
<dbReference type="PANTHER" id="PTHR10458:SF2">
    <property type="entry name" value="PEPTIDE DEFORMYLASE, MITOCHONDRIAL"/>
    <property type="match status" value="1"/>
</dbReference>
<dbReference type="Pfam" id="PF01327">
    <property type="entry name" value="Pep_deformylase"/>
    <property type="match status" value="1"/>
</dbReference>
<dbReference type="PIRSF" id="PIRSF004749">
    <property type="entry name" value="Pep_def"/>
    <property type="match status" value="1"/>
</dbReference>
<dbReference type="PRINTS" id="PR01576">
    <property type="entry name" value="PDEFORMYLASE"/>
</dbReference>
<dbReference type="SUPFAM" id="SSF56420">
    <property type="entry name" value="Peptide deformylase"/>
    <property type="match status" value="1"/>
</dbReference>
<sequence>MAVVPIRIVGDPVLHTPTSPVPVGADGSLPADLPELIATMYETMDAAHGVGLAANQIGYGLRLFVYDCADDRRKAAHRRGVVINPVLETSEIPENMPDPDNDDEGCLSVPGESFPTGRATWARVTGLDAEGNPVELEGSGLFARMLQHETGHLDGYLYLDCLIGRHARSAKRAVKSHGWGVPGLSWLPGEGPDPFGH</sequence>
<protein>
    <recommendedName>
        <fullName evidence="1">Peptide deformylase</fullName>
        <shortName evidence="1">PDF</shortName>
        <ecNumber evidence="1">3.5.1.88</ecNumber>
    </recommendedName>
    <alternativeName>
        <fullName evidence="1">Polypeptide deformylase</fullName>
    </alternativeName>
</protein>
<accession>A0PNK2</accession>
<name>DEF_MYCUA</name>
<proteinExistence type="inferred from homology"/>
<comment type="function">
    <text evidence="1">Removes the formyl group from the N-terminal Met of newly synthesized proteins. Requires at least a dipeptide for an efficient rate of reaction. N-terminal L-methionine is a prerequisite for activity but the enzyme has broad specificity at other positions.</text>
</comment>
<comment type="catalytic activity">
    <reaction evidence="1">
        <text>N-terminal N-formyl-L-methionyl-[peptide] + H2O = N-terminal L-methionyl-[peptide] + formate</text>
        <dbReference type="Rhea" id="RHEA:24420"/>
        <dbReference type="Rhea" id="RHEA-COMP:10639"/>
        <dbReference type="Rhea" id="RHEA-COMP:10640"/>
        <dbReference type="ChEBI" id="CHEBI:15377"/>
        <dbReference type="ChEBI" id="CHEBI:15740"/>
        <dbReference type="ChEBI" id="CHEBI:49298"/>
        <dbReference type="ChEBI" id="CHEBI:64731"/>
        <dbReference type="EC" id="3.5.1.88"/>
    </reaction>
</comment>
<comment type="cofactor">
    <cofactor evidence="1">
        <name>Fe(2+)</name>
        <dbReference type="ChEBI" id="CHEBI:29033"/>
    </cofactor>
    <text evidence="1">Binds 1 Fe(2+) ion.</text>
</comment>
<comment type="similarity">
    <text evidence="1">Belongs to the polypeptide deformylase family.</text>
</comment>
<gene>
    <name evidence="1" type="primary">def</name>
    <name type="ordered locus">MUL_1376</name>
</gene>
<reference key="1">
    <citation type="journal article" date="2007" name="Genome Res.">
        <title>Reductive evolution and niche adaptation inferred from the genome of Mycobacterium ulcerans, the causative agent of Buruli ulcer.</title>
        <authorList>
            <person name="Stinear T.P."/>
            <person name="Seemann T."/>
            <person name="Pidot S."/>
            <person name="Frigui W."/>
            <person name="Reysset G."/>
            <person name="Garnier T."/>
            <person name="Meurice G."/>
            <person name="Simon D."/>
            <person name="Bouchier C."/>
            <person name="Ma L."/>
            <person name="Tichit M."/>
            <person name="Porter J.L."/>
            <person name="Ryan J."/>
            <person name="Johnson P.D.R."/>
            <person name="Davies J.K."/>
            <person name="Jenkin G.A."/>
            <person name="Small P.L.C."/>
            <person name="Jones L.M."/>
            <person name="Tekaia F."/>
            <person name="Laval F."/>
            <person name="Daffe M."/>
            <person name="Parkhill J."/>
            <person name="Cole S.T."/>
        </authorList>
    </citation>
    <scope>NUCLEOTIDE SEQUENCE [LARGE SCALE GENOMIC DNA]</scope>
    <source>
        <strain>Agy99</strain>
    </source>
</reference>